<organism>
    <name type="scientific">Yersinia pestis (strain Pestoides F)</name>
    <dbReference type="NCBI Taxonomy" id="386656"/>
    <lineage>
        <taxon>Bacteria</taxon>
        <taxon>Pseudomonadati</taxon>
        <taxon>Pseudomonadota</taxon>
        <taxon>Gammaproteobacteria</taxon>
        <taxon>Enterobacterales</taxon>
        <taxon>Yersiniaceae</taxon>
        <taxon>Yersinia</taxon>
    </lineage>
</organism>
<accession>A4TH03</accession>
<name>RL24_YERPP</name>
<keyword id="KW-0687">Ribonucleoprotein</keyword>
<keyword id="KW-0689">Ribosomal protein</keyword>
<keyword id="KW-0694">RNA-binding</keyword>
<keyword id="KW-0699">rRNA-binding</keyword>
<feature type="chain" id="PRO_1000052339" description="Large ribosomal subunit protein uL24">
    <location>
        <begin position="1"/>
        <end position="104"/>
    </location>
</feature>
<comment type="function">
    <text evidence="1">One of two assembly initiator proteins, it binds directly to the 5'-end of the 23S rRNA, where it nucleates assembly of the 50S subunit.</text>
</comment>
<comment type="function">
    <text evidence="1">One of the proteins that surrounds the polypeptide exit tunnel on the outside of the subunit.</text>
</comment>
<comment type="subunit">
    <text evidence="1">Part of the 50S ribosomal subunit.</text>
</comment>
<comment type="similarity">
    <text evidence="1">Belongs to the universal ribosomal protein uL24 family.</text>
</comment>
<evidence type="ECO:0000255" key="1">
    <source>
        <dbReference type="HAMAP-Rule" id="MF_01326"/>
    </source>
</evidence>
<evidence type="ECO:0000305" key="2"/>
<dbReference type="EMBL" id="CP000668">
    <property type="protein sequence ID" value="ABP38566.1"/>
    <property type="molecule type" value="Genomic_DNA"/>
</dbReference>
<dbReference type="RefSeq" id="WP_002213327.1">
    <property type="nucleotide sequence ID" value="NZ_CP009715.1"/>
</dbReference>
<dbReference type="SMR" id="A4TH03"/>
<dbReference type="GeneID" id="57974384"/>
<dbReference type="KEGG" id="ypp:YPDSF_0144"/>
<dbReference type="PATRIC" id="fig|386656.14.peg.423"/>
<dbReference type="GO" id="GO:1990904">
    <property type="term" value="C:ribonucleoprotein complex"/>
    <property type="evidence" value="ECO:0007669"/>
    <property type="project" value="UniProtKB-KW"/>
</dbReference>
<dbReference type="GO" id="GO:0005840">
    <property type="term" value="C:ribosome"/>
    <property type="evidence" value="ECO:0007669"/>
    <property type="project" value="UniProtKB-KW"/>
</dbReference>
<dbReference type="GO" id="GO:0019843">
    <property type="term" value="F:rRNA binding"/>
    <property type="evidence" value="ECO:0007669"/>
    <property type="project" value="UniProtKB-UniRule"/>
</dbReference>
<dbReference type="GO" id="GO:0003735">
    <property type="term" value="F:structural constituent of ribosome"/>
    <property type="evidence" value="ECO:0007669"/>
    <property type="project" value="InterPro"/>
</dbReference>
<dbReference type="GO" id="GO:0006412">
    <property type="term" value="P:translation"/>
    <property type="evidence" value="ECO:0007669"/>
    <property type="project" value="UniProtKB-UniRule"/>
</dbReference>
<dbReference type="CDD" id="cd06089">
    <property type="entry name" value="KOW_RPL26"/>
    <property type="match status" value="1"/>
</dbReference>
<dbReference type="FunFam" id="2.30.30.30:FF:000004">
    <property type="entry name" value="50S ribosomal protein L24"/>
    <property type="match status" value="1"/>
</dbReference>
<dbReference type="Gene3D" id="2.30.30.30">
    <property type="match status" value="1"/>
</dbReference>
<dbReference type="HAMAP" id="MF_01326_B">
    <property type="entry name" value="Ribosomal_uL24_B"/>
    <property type="match status" value="1"/>
</dbReference>
<dbReference type="InterPro" id="IPR005824">
    <property type="entry name" value="KOW"/>
</dbReference>
<dbReference type="InterPro" id="IPR014722">
    <property type="entry name" value="Rib_uL2_dom2"/>
</dbReference>
<dbReference type="InterPro" id="IPR003256">
    <property type="entry name" value="Ribosomal_uL24"/>
</dbReference>
<dbReference type="InterPro" id="IPR005825">
    <property type="entry name" value="Ribosomal_uL24_CS"/>
</dbReference>
<dbReference type="InterPro" id="IPR041988">
    <property type="entry name" value="Ribosomal_uL24_KOW"/>
</dbReference>
<dbReference type="InterPro" id="IPR008991">
    <property type="entry name" value="Translation_prot_SH3-like_sf"/>
</dbReference>
<dbReference type="NCBIfam" id="TIGR01079">
    <property type="entry name" value="rplX_bact"/>
    <property type="match status" value="1"/>
</dbReference>
<dbReference type="PANTHER" id="PTHR12903">
    <property type="entry name" value="MITOCHONDRIAL RIBOSOMAL PROTEIN L24"/>
    <property type="match status" value="1"/>
</dbReference>
<dbReference type="Pfam" id="PF00467">
    <property type="entry name" value="KOW"/>
    <property type="match status" value="1"/>
</dbReference>
<dbReference type="Pfam" id="PF17136">
    <property type="entry name" value="ribosomal_L24"/>
    <property type="match status" value="1"/>
</dbReference>
<dbReference type="SMART" id="SM00739">
    <property type="entry name" value="KOW"/>
    <property type="match status" value="1"/>
</dbReference>
<dbReference type="SUPFAM" id="SSF50104">
    <property type="entry name" value="Translation proteins SH3-like domain"/>
    <property type="match status" value="1"/>
</dbReference>
<dbReference type="PROSITE" id="PS01108">
    <property type="entry name" value="RIBOSOMAL_L24"/>
    <property type="match status" value="1"/>
</dbReference>
<sequence>MAAKIRRDDEVIVLTGKDKGKRGKVKNVLSSGKVIVEGINLVKKHQKPVPALNQPGGIVEKEAAIQVSNLALFNATTGKADRVGFRFEDGKKVRFFKSTSETIK</sequence>
<protein>
    <recommendedName>
        <fullName evidence="1">Large ribosomal subunit protein uL24</fullName>
    </recommendedName>
    <alternativeName>
        <fullName evidence="2">50S ribosomal protein L24</fullName>
    </alternativeName>
</protein>
<proteinExistence type="inferred from homology"/>
<gene>
    <name evidence="1" type="primary">rplX</name>
    <name type="ordered locus">YPDSF_0144</name>
</gene>
<reference key="1">
    <citation type="submission" date="2007-02" db="EMBL/GenBank/DDBJ databases">
        <title>Complete sequence of chromosome of Yersinia pestis Pestoides F.</title>
        <authorList>
            <consortium name="US DOE Joint Genome Institute"/>
            <person name="Copeland A."/>
            <person name="Lucas S."/>
            <person name="Lapidus A."/>
            <person name="Barry K."/>
            <person name="Detter J.C."/>
            <person name="Glavina del Rio T."/>
            <person name="Hammon N."/>
            <person name="Israni S."/>
            <person name="Dalin E."/>
            <person name="Tice H."/>
            <person name="Pitluck S."/>
            <person name="Di Bartolo G."/>
            <person name="Chain P."/>
            <person name="Malfatti S."/>
            <person name="Shin M."/>
            <person name="Vergez L."/>
            <person name="Schmutz J."/>
            <person name="Larimer F."/>
            <person name="Land M."/>
            <person name="Hauser L."/>
            <person name="Worsham P."/>
            <person name="Chu M."/>
            <person name="Bearden S."/>
            <person name="Garcia E."/>
            <person name="Richardson P."/>
        </authorList>
    </citation>
    <scope>NUCLEOTIDE SEQUENCE [LARGE SCALE GENOMIC DNA]</scope>
    <source>
        <strain>Pestoides F</strain>
    </source>
</reference>